<keyword id="KW-0489">Methyltransferase</keyword>
<keyword id="KW-0949">S-adenosyl-L-methionine</keyword>
<keyword id="KW-0808">Transferase</keyword>
<keyword id="KW-0819">tRNA processing</keyword>
<reference key="1">
    <citation type="journal article" date="2010" name="Genome Biol. Evol.">
        <title>Continuing evolution of Burkholderia mallei through genome reduction and large-scale rearrangements.</title>
        <authorList>
            <person name="Losada L."/>
            <person name="Ronning C.M."/>
            <person name="DeShazer D."/>
            <person name="Woods D."/>
            <person name="Fedorova N."/>
            <person name="Kim H.S."/>
            <person name="Shabalina S.A."/>
            <person name="Pearson T.R."/>
            <person name="Brinkac L."/>
            <person name="Tan P."/>
            <person name="Nandi T."/>
            <person name="Crabtree J."/>
            <person name="Badger J."/>
            <person name="Beckstrom-Sternberg S."/>
            <person name="Saqib M."/>
            <person name="Schutzer S.E."/>
            <person name="Keim P."/>
            <person name="Nierman W.C."/>
        </authorList>
    </citation>
    <scope>NUCLEOTIDE SEQUENCE [LARGE SCALE GENOMIC DNA]</scope>
    <source>
        <strain>1710b</strain>
    </source>
</reference>
<sequence>MIHDDDPNAPGAPHDDDATAAPASATRAAPAAGDDDDANPLHLRRIRSFVTRAGRVSTGQRRAIDELGPRFVIPYGSAQPDWDAIFGRRAPRVLEIGFGMGASTAEIAALRPGDDFIGVEVHEPGVGALLKLIGEQQLSNIRIIQHDAVEVLAQMIAPDSLDGVHIFFPDPWHKARHHKRRLIQPPFVAQLAAHLKPGAYLHCATDWQNYAEQMLEVLSADPSLENTAQDYAPRPGYRPVTKFERRGLRLGHGVWDLVFRKKHAG</sequence>
<gene>
    <name evidence="2" type="primary">trmB</name>
    <name type="ordered locus">BURPS1710b_3119</name>
</gene>
<feature type="chain" id="PRO_0000229157" description="tRNA (guanine-N(7)-)-methyltransferase">
    <location>
        <begin position="1"/>
        <end position="265"/>
    </location>
</feature>
<feature type="region of interest" description="Disordered" evidence="3">
    <location>
        <begin position="1"/>
        <end position="40"/>
    </location>
</feature>
<feature type="compositionally biased region" description="Low complexity" evidence="3">
    <location>
        <begin position="19"/>
        <end position="32"/>
    </location>
</feature>
<feature type="active site" evidence="1">
    <location>
        <position position="170"/>
    </location>
</feature>
<feature type="binding site" evidence="2">
    <location>
        <position position="95"/>
    </location>
    <ligand>
        <name>S-adenosyl-L-methionine</name>
        <dbReference type="ChEBI" id="CHEBI:59789"/>
    </ligand>
</feature>
<feature type="binding site" evidence="2">
    <location>
        <position position="120"/>
    </location>
    <ligand>
        <name>S-adenosyl-L-methionine</name>
        <dbReference type="ChEBI" id="CHEBI:59789"/>
    </ligand>
</feature>
<feature type="binding site" evidence="2">
    <location>
        <position position="147"/>
    </location>
    <ligand>
        <name>S-adenosyl-L-methionine</name>
        <dbReference type="ChEBI" id="CHEBI:59789"/>
    </ligand>
</feature>
<feature type="binding site" evidence="2">
    <location>
        <position position="170"/>
    </location>
    <ligand>
        <name>S-adenosyl-L-methionine</name>
        <dbReference type="ChEBI" id="CHEBI:59789"/>
    </ligand>
</feature>
<feature type="binding site" evidence="2">
    <location>
        <position position="174"/>
    </location>
    <ligand>
        <name>substrate</name>
    </ligand>
</feature>
<feature type="binding site" evidence="2">
    <location>
        <position position="206"/>
    </location>
    <ligand>
        <name>substrate</name>
    </ligand>
</feature>
<feature type="binding site" evidence="2">
    <location>
        <begin position="241"/>
        <end position="244"/>
    </location>
    <ligand>
        <name>substrate</name>
    </ligand>
</feature>
<evidence type="ECO:0000250" key="1"/>
<evidence type="ECO:0000255" key="2">
    <source>
        <dbReference type="HAMAP-Rule" id="MF_01057"/>
    </source>
</evidence>
<evidence type="ECO:0000256" key="3">
    <source>
        <dbReference type="SAM" id="MobiDB-lite"/>
    </source>
</evidence>
<protein>
    <recommendedName>
        <fullName evidence="2">tRNA (guanine-N(7)-)-methyltransferase</fullName>
        <ecNumber evidence="2">2.1.1.33</ecNumber>
    </recommendedName>
    <alternativeName>
        <fullName evidence="2">tRNA (guanine(46)-N(7))-methyltransferase</fullName>
    </alternativeName>
    <alternativeName>
        <fullName evidence="2">tRNA(m7G46)-methyltransferase</fullName>
    </alternativeName>
</protein>
<accession>Q3JPL2</accession>
<name>TRMB_BURP1</name>
<proteinExistence type="inferred from homology"/>
<comment type="function">
    <text evidence="2">Catalyzes the formation of N(7)-methylguanine at position 46 (m7G46) in tRNA.</text>
</comment>
<comment type="catalytic activity">
    <reaction evidence="2">
        <text>guanosine(46) in tRNA + S-adenosyl-L-methionine = N(7)-methylguanosine(46) in tRNA + S-adenosyl-L-homocysteine</text>
        <dbReference type="Rhea" id="RHEA:42708"/>
        <dbReference type="Rhea" id="RHEA-COMP:10188"/>
        <dbReference type="Rhea" id="RHEA-COMP:10189"/>
        <dbReference type="ChEBI" id="CHEBI:57856"/>
        <dbReference type="ChEBI" id="CHEBI:59789"/>
        <dbReference type="ChEBI" id="CHEBI:74269"/>
        <dbReference type="ChEBI" id="CHEBI:74480"/>
        <dbReference type="EC" id="2.1.1.33"/>
    </reaction>
</comment>
<comment type="pathway">
    <text evidence="2">tRNA modification; N(7)-methylguanine-tRNA biosynthesis.</text>
</comment>
<comment type="similarity">
    <text evidence="2">Belongs to the class I-like SAM-binding methyltransferase superfamily. TrmB family.</text>
</comment>
<organism>
    <name type="scientific">Burkholderia pseudomallei (strain 1710b)</name>
    <dbReference type="NCBI Taxonomy" id="320372"/>
    <lineage>
        <taxon>Bacteria</taxon>
        <taxon>Pseudomonadati</taxon>
        <taxon>Pseudomonadota</taxon>
        <taxon>Betaproteobacteria</taxon>
        <taxon>Burkholderiales</taxon>
        <taxon>Burkholderiaceae</taxon>
        <taxon>Burkholderia</taxon>
        <taxon>pseudomallei group</taxon>
    </lineage>
</organism>
<dbReference type="EC" id="2.1.1.33" evidence="2"/>
<dbReference type="EMBL" id="CP000124">
    <property type="protein sequence ID" value="ABA49298.1"/>
    <property type="molecule type" value="Genomic_DNA"/>
</dbReference>
<dbReference type="RefSeq" id="WP_004527577.1">
    <property type="nucleotide sequence ID" value="NC_007434.1"/>
</dbReference>
<dbReference type="SMR" id="Q3JPL2"/>
<dbReference type="EnsemblBacteria" id="ABA49298">
    <property type="protein sequence ID" value="ABA49298"/>
    <property type="gene ID" value="BURPS1710b_3119"/>
</dbReference>
<dbReference type="KEGG" id="bpm:BURPS1710b_3119"/>
<dbReference type="HOGENOM" id="CLU_050910_0_1_4"/>
<dbReference type="UniPathway" id="UPA00989"/>
<dbReference type="Proteomes" id="UP000002700">
    <property type="component" value="Chromosome I"/>
</dbReference>
<dbReference type="GO" id="GO:0043527">
    <property type="term" value="C:tRNA methyltransferase complex"/>
    <property type="evidence" value="ECO:0007669"/>
    <property type="project" value="TreeGrafter"/>
</dbReference>
<dbReference type="GO" id="GO:0008176">
    <property type="term" value="F:tRNA (guanine(46)-N7)-methyltransferase activity"/>
    <property type="evidence" value="ECO:0007669"/>
    <property type="project" value="UniProtKB-UniRule"/>
</dbReference>
<dbReference type="CDD" id="cd02440">
    <property type="entry name" value="AdoMet_MTases"/>
    <property type="match status" value="1"/>
</dbReference>
<dbReference type="FunFam" id="3.40.50.150:FF:000035">
    <property type="entry name" value="tRNA (guanine-N(7)-)-methyltransferase"/>
    <property type="match status" value="1"/>
</dbReference>
<dbReference type="Gene3D" id="3.40.50.150">
    <property type="entry name" value="Vaccinia Virus protein VP39"/>
    <property type="match status" value="1"/>
</dbReference>
<dbReference type="HAMAP" id="MF_01057">
    <property type="entry name" value="tRNA_methyltr_TrmB"/>
    <property type="match status" value="1"/>
</dbReference>
<dbReference type="InterPro" id="IPR029063">
    <property type="entry name" value="SAM-dependent_MTases_sf"/>
</dbReference>
<dbReference type="InterPro" id="IPR003358">
    <property type="entry name" value="tRNA_(Gua-N-7)_MeTrfase_Trmb"/>
</dbReference>
<dbReference type="InterPro" id="IPR055361">
    <property type="entry name" value="tRNA_methyltr_TrmB_bact"/>
</dbReference>
<dbReference type="NCBIfam" id="TIGR00091">
    <property type="entry name" value="tRNA (guanosine(46)-N7)-methyltransferase TrmB"/>
    <property type="match status" value="1"/>
</dbReference>
<dbReference type="PANTHER" id="PTHR23417">
    <property type="entry name" value="3-DEOXY-D-MANNO-OCTULOSONIC-ACID TRANSFERASE/TRNA GUANINE-N 7 - -METHYLTRANSFERASE"/>
    <property type="match status" value="1"/>
</dbReference>
<dbReference type="PANTHER" id="PTHR23417:SF14">
    <property type="entry name" value="PENTACOTRIPEPTIDE-REPEAT REGION OF PRORP DOMAIN-CONTAINING PROTEIN"/>
    <property type="match status" value="1"/>
</dbReference>
<dbReference type="Pfam" id="PF02390">
    <property type="entry name" value="Methyltransf_4"/>
    <property type="match status" value="1"/>
</dbReference>
<dbReference type="SUPFAM" id="SSF53335">
    <property type="entry name" value="S-adenosyl-L-methionine-dependent methyltransferases"/>
    <property type="match status" value="1"/>
</dbReference>
<dbReference type="PROSITE" id="PS51625">
    <property type="entry name" value="SAM_MT_TRMB"/>
    <property type="match status" value="1"/>
</dbReference>